<organism>
    <name type="scientific">Xenopus laevis</name>
    <name type="common">African clawed frog</name>
    <dbReference type="NCBI Taxonomy" id="8355"/>
    <lineage>
        <taxon>Eukaryota</taxon>
        <taxon>Metazoa</taxon>
        <taxon>Chordata</taxon>
        <taxon>Craniata</taxon>
        <taxon>Vertebrata</taxon>
        <taxon>Euteleostomi</taxon>
        <taxon>Amphibia</taxon>
        <taxon>Batrachia</taxon>
        <taxon>Anura</taxon>
        <taxon>Pipoidea</taxon>
        <taxon>Pipidae</taxon>
        <taxon>Xenopodinae</taxon>
        <taxon>Xenopus</taxon>
        <taxon>Xenopus</taxon>
    </lineage>
</organism>
<sequence>MFPQNRPPTHLQASVATGAASGPPQSLKLTYPETLDRIKEEFQFLQSQYHSLKLECEKLATEKTEIQRHYVMYYEMSYGLNIEMHKQTEIAKRLNVICAQLVPFLSQEHQQQVVQAVERAKQVTMAELNAAIGVRFIPPQLTVHQLQAQHLSHHAPPIPLTPHPSSLQHPGLAAATSASSLLGYLVFLAFRHNLLQKRAADAEHRERDPGPSCLTLPNGERVPTLSDYLNSNTKRKTEEKDFGTDYGSDADRSEDNLVVDEDPASPHSVHSYSSRENGVDKPTLQRKDPPPASPNSMTSSSSVSPSRSKDIPSQQVEKAGTPGLKSSTPNSQSDLNTPGPSGTSASQFRSIATKPAIDSLALGLRTPLGGQGGYPAAFSIAHPSVNADGAGAYAGLHLMSPQINGATAAGTYGRSPLVSYDPHAHMRGLGSAIPGSASGKPAYSFHVSADGQMQPVPFPPDALIGSGIPRHARQLHVLNHGEVVCAVTISNSTRHVYTGGKGCVKVWDVGQPGTKTPVAQLDCLNRDNYIRSCKLLPDGRSLIVGGEASTLSIWDLASPTPRIKAELTSSAPACYALAISPDAKVCFSCCSDGNIVVWDLQNQTLVRQFQGHTDGASCIDISHDGTKLWTGGLDNTVRCWDLREGRQLQQHDFNSQIFSLGYCPTGEWLAVGMESSNIEVLHVSKPDKYQLHLHESCVLSLQFASCGKWFVSTGKDNLLNAWRTPYGASIFQSKESSSVLSCDVSTDDQFIVTGSGDKKATVYEVIY</sequence>
<reference key="1">
    <citation type="journal article" date="1997" name="Gene">
        <title>Cloning and developmental expression of Xenopus cDNAs encoding the Enhancer of split groucho and related proteins.</title>
        <authorList>
            <person name="Choudhury B.K."/>
            <person name="Kim J."/>
            <person name="Kung H.-F."/>
            <person name="Li S.S.-L."/>
        </authorList>
    </citation>
    <scope>NUCLEOTIDE SEQUENCE [MRNA]</scope>
    <source>
        <tissue>Ovary</tissue>
    </source>
</reference>
<dbReference type="EMBL" id="U18775">
    <property type="protein sequence ID" value="AAC60271.1"/>
    <property type="molecule type" value="mRNA"/>
</dbReference>
<dbReference type="SMR" id="O42469"/>
<dbReference type="AGR" id="Xenbase:XB-GENE-876631"/>
<dbReference type="Xenbase" id="XB-GENE-876631">
    <property type="gene designation" value="tle2.L"/>
</dbReference>
<dbReference type="Proteomes" id="UP000186698">
    <property type="component" value="Unplaced"/>
</dbReference>
<dbReference type="GO" id="GO:0005634">
    <property type="term" value="C:nucleus"/>
    <property type="evidence" value="ECO:0000318"/>
    <property type="project" value="GO_Central"/>
</dbReference>
<dbReference type="GO" id="GO:0005667">
    <property type="term" value="C:transcription regulator complex"/>
    <property type="evidence" value="ECO:0000318"/>
    <property type="project" value="GO_Central"/>
</dbReference>
<dbReference type="GO" id="GO:0003714">
    <property type="term" value="F:transcription corepressor activity"/>
    <property type="evidence" value="ECO:0000318"/>
    <property type="project" value="GO_Central"/>
</dbReference>
<dbReference type="GO" id="GO:0090090">
    <property type="term" value="P:negative regulation of canonical Wnt signaling pathway"/>
    <property type="evidence" value="ECO:0000318"/>
    <property type="project" value="GO_Central"/>
</dbReference>
<dbReference type="CDD" id="cd00200">
    <property type="entry name" value="WD40"/>
    <property type="match status" value="1"/>
</dbReference>
<dbReference type="FunFam" id="2.130.10.10:FF:000001">
    <property type="entry name" value="transducin-like enhancer protein 3 isoform X1"/>
    <property type="match status" value="1"/>
</dbReference>
<dbReference type="Gene3D" id="2.130.10.10">
    <property type="entry name" value="YVTN repeat-like/Quinoprotein amine dehydrogenase"/>
    <property type="match status" value="1"/>
</dbReference>
<dbReference type="InterPro" id="IPR005617">
    <property type="entry name" value="Groucho/TLE_N"/>
</dbReference>
<dbReference type="InterPro" id="IPR009146">
    <property type="entry name" value="Groucho_enhance"/>
</dbReference>
<dbReference type="InterPro" id="IPR015943">
    <property type="entry name" value="WD40/YVTN_repeat-like_dom_sf"/>
</dbReference>
<dbReference type="InterPro" id="IPR019775">
    <property type="entry name" value="WD40_repeat_CS"/>
</dbReference>
<dbReference type="InterPro" id="IPR036322">
    <property type="entry name" value="WD40_repeat_dom_sf"/>
</dbReference>
<dbReference type="InterPro" id="IPR001680">
    <property type="entry name" value="WD40_rpt"/>
</dbReference>
<dbReference type="PANTHER" id="PTHR10814">
    <property type="entry name" value="TRANSDUCIN-LIKE ENHANCER PROTEIN"/>
    <property type="match status" value="1"/>
</dbReference>
<dbReference type="PANTHER" id="PTHR10814:SF33">
    <property type="entry name" value="TRANSDUCIN-LIKE ENHANCER PROTEIN 7"/>
    <property type="match status" value="1"/>
</dbReference>
<dbReference type="Pfam" id="PF03920">
    <property type="entry name" value="TLE_N"/>
    <property type="match status" value="1"/>
</dbReference>
<dbReference type="Pfam" id="PF00400">
    <property type="entry name" value="WD40"/>
    <property type="match status" value="6"/>
</dbReference>
<dbReference type="PRINTS" id="PR01850">
    <property type="entry name" value="GROUCHOFAMLY"/>
</dbReference>
<dbReference type="SMART" id="SM00320">
    <property type="entry name" value="WD40"/>
    <property type="match status" value="7"/>
</dbReference>
<dbReference type="SUPFAM" id="SSF50978">
    <property type="entry name" value="WD40 repeat-like"/>
    <property type="match status" value="1"/>
</dbReference>
<dbReference type="PROSITE" id="PS00678">
    <property type="entry name" value="WD_REPEATS_1"/>
    <property type="match status" value="1"/>
</dbReference>
<dbReference type="PROSITE" id="PS50082">
    <property type="entry name" value="WD_REPEATS_2"/>
    <property type="match status" value="3"/>
</dbReference>
<dbReference type="PROSITE" id="PS50294">
    <property type="entry name" value="WD_REPEATS_REGION"/>
    <property type="match status" value="2"/>
</dbReference>
<comment type="function">
    <text evidence="1">Nuclear effector molecule.</text>
</comment>
<comment type="subcellular location">
    <subcellularLocation>
        <location evidence="3">Nucleus</location>
    </subcellularLocation>
</comment>
<comment type="tissue specificity">
    <text>Abundantly expressed in brain, lung, testis and ovary in comparison with liver, heart, kidney and spleen. Ubiquitously expressed in the developing embryo. Present in unfertilized and fertilized eggs.</text>
</comment>
<comment type="PTM">
    <text evidence="1">Ubiquitinated by XIAP/BIRC4.</text>
</comment>
<comment type="similarity">
    <text evidence="3">Belongs to the WD repeat Groucho/TLE family.</text>
</comment>
<keyword id="KW-0539">Nucleus</keyword>
<keyword id="KW-1185">Reference proteome</keyword>
<keyword id="KW-0677">Repeat</keyword>
<keyword id="KW-0832">Ubl conjugation</keyword>
<keyword id="KW-0853">WD repeat</keyword>
<name>TLE1_XENLA</name>
<proteinExistence type="evidence at transcript level"/>
<protein>
    <recommendedName>
        <fullName>Transducin-like enhancer protein 1</fullName>
    </recommendedName>
    <alternativeName>
        <fullName>Enhancer of split groucho-like protein 1</fullName>
        <shortName>ESG1</shortName>
    </alternativeName>
</protein>
<accession>O42469</accession>
<feature type="chain" id="PRO_0000051290" description="Transducin-like enhancer protein 1">
    <location>
        <begin position="1"/>
        <end position="767"/>
    </location>
</feature>
<feature type="repeat" description="WD 1">
    <location>
        <begin position="467"/>
        <end position="498"/>
    </location>
</feature>
<feature type="repeat" description="WD 2">
    <location>
        <begin position="525"/>
        <end position="555"/>
    </location>
</feature>
<feature type="repeat" description="WD 3">
    <location>
        <begin position="569"/>
        <end position="599"/>
    </location>
</feature>
<feature type="repeat" description="WD 4">
    <location>
        <begin position="611"/>
        <end position="641"/>
    </location>
</feature>
<feature type="repeat" description="WD 5">
    <location>
        <begin position="693"/>
        <end position="723"/>
    </location>
</feature>
<feature type="repeat" description="WD 6">
    <location>
        <begin position="734"/>
        <end position="764"/>
    </location>
</feature>
<feature type="region of interest" description="Disordered" evidence="2">
    <location>
        <begin position="1"/>
        <end position="26"/>
    </location>
</feature>
<feature type="region of interest" description="Disordered" evidence="2">
    <location>
        <begin position="200"/>
        <end position="346"/>
    </location>
</feature>
<feature type="region of interest" description="CCN domain">
    <location>
        <begin position="212"/>
        <end position="274"/>
    </location>
</feature>
<feature type="compositionally biased region" description="Basic and acidic residues" evidence="2">
    <location>
        <begin position="200"/>
        <end position="209"/>
    </location>
</feature>
<feature type="compositionally biased region" description="Basic and acidic residues" evidence="2">
    <location>
        <begin position="235"/>
        <end position="255"/>
    </location>
</feature>
<feature type="compositionally biased region" description="Basic and acidic residues" evidence="2">
    <location>
        <begin position="277"/>
        <end position="289"/>
    </location>
</feature>
<feature type="compositionally biased region" description="Low complexity" evidence="2">
    <location>
        <begin position="294"/>
        <end position="306"/>
    </location>
</feature>
<feature type="compositionally biased region" description="Polar residues" evidence="2">
    <location>
        <begin position="324"/>
        <end position="346"/>
    </location>
</feature>
<evidence type="ECO:0000250" key="1"/>
<evidence type="ECO:0000256" key="2">
    <source>
        <dbReference type="SAM" id="MobiDB-lite"/>
    </source>
</evidence>
<evidence type="ECO:0000305" key="3"/>
<gene>
    <name type="primary">esg1</name>
    <name type="synonym">esg</name>
</gene>